<proteinExistence type="evidence at protein level"/>
<keyword id="KW-0238">DNA-binding</keyword>
<keyword id="KW-0479">Metal-binding</keyword>
<keyword id="KW-0539">Nucleus</keyword>
<keyword id="KW-1267">Proteomics identification</keyword>
<keyword id="KW-1185">Reference proteome</keyword>
<keyword id="KW-0677">Repeat</keyword>
<keyword id="KW-0804">Transcription</keyword>
<keyword id="KW-0805">Transcription regulation</keyword>
<keyword id="KW-0862">Zinc</keyword>
<keyword id="KW-0863">Zinc-finger</keyword>
<sequence length="683" mass="79142">MSPHPEAITDCVTLNTVGQLAEGGYPLRFSTLFQEQQKMNISQASVSFKDVTIEFTQEEWQQMAPVQKNLYRDVMLENYSNLVSVGYCCFKPEVIFKLEQGEEPWFSEEEFSNQSHPKDYRGDDLIKQNKKIKDKHLEQAICINNKTLTTEEEKVLGKPFTLHVAAVASTKMSCKCNSWEVNLQSISEFIINNRNYSTKKIGCGNVCENSPFKINFEKTQTGEKFYEHNKNMKALNYNENLPKHPKFQTLEQAFECNKIGKAFNDKANCVKHNSSHTGETSSKDDEFRKNCDKKTLFDHRRTGTGKKHLHLNQCGKSFEKSTVEEYNKLNMGIKHYELNPSGNNFNRKAHLTDPQTAVIEENPLVSNDRTQTWVKSSEYHENKKSYQTSVHRVRRRSHSMMKPYKCNECGKSFCQKGHLIQHQRTHTGEKPFECSECGKTFSQKSHLSTHQRIHTAEKPYKCNECGKTFVQKSTLRGHQRIHTGEKPYECSECGKTFVQKSTLRDHHRIHTGEKSFQCNQCGKTFGQKSNLRIHQRTHTGEKTYQCNECEKSFWRKDHLIQHQKTHTGEKPFKCNECGKTFARTSTLRVHQRIHTGEKPFKCNECGKKFVRKAILSDHQRIHTGEKPFQCNKCGKTFGQKSNLRIHQRTHSGEKSYECNEYGKLCKKSTLSLYQKIQGEGNPY</sequence>
<comment type="function">
    <text>May be involved in transcriptional regulation.</text>
</comment>
<comment type="subcellular location">
    <subcellularLocation>
        <location evidence="3">Nucleus</location>
    </subcellularLocation>
</comment>
<comment type="similarity">
    <text evidence="3">Belongs to the krueppel C2H2-type zinc-finger protein family.</text>
</comment>
<comment type="sequence caution" evidence="3">
    <conflict type="erroneous initiation">
        <sequence resource="EMBL-CDS" id="BAA76816"/>
    </conflict>
</comment>
<dbReference type="EMBL" id="AB023189">
    <property type="protein sequence ID" value="BAA76816.2"/>
    <property type="status" value="ALT_INIT"/>
    <property type="molecule type" value="mRNA"/>
</dbReference>
<dbReference type="EMBL" id="AK292600">
    <property type="protein sequence ID" value="BAF85289.1"/>
    <property type="molecule type" value="mRNA"/>
</dbReference>
<dbReference type="EMBL" id="AL589843">
    <property type="status" value="NOT_ANNOTATED_CDS"/>
    <property type="molecule type" value="Genomic_DNA"/>
</dbReference>
<dbReference type="EMBL" id="CH471174">
    <property type="protein sequence ID" value="EAW92666.1"/>
    <property type="molecule type" value="Genomic_DNA"/>
</dbReference>
<dbReference type="EMBL" id="BC058022">
    <property type="protein sequence ID" value="AAH58022.1"/>
    <property type="status" value="ALT_TERM"/>
    <property type="molecule type" value="mRNA"/>
</dbReference>
<dbReference type="CCDS" id="CCDS35074.1"/>
<dbReference type="RefSeq" id="NP_001300988.1">
    <property type="nucleotide sequence ID" value="NM_001314059.2"/>
</dbReference>
<dbReference type="RefSeq" id="NP_055745.1">
    <property type="nucleotide sequence ID" value="NM_014930.3"/>
</dbReference>
<dbReference type="RefSeq" id="XP_016869972.1">
    <property type="nucleotide sequence ID" value="XM_017014483.2"/>
</dbReference>
<dbReference type="RefSeq" id="XP_054218360.1">
    <property type="nucleotide sequence ID" value="XM_054362385.1"/>
</dbReference>
<dbReference type="SMR" id="Q9Y2H8"/>
<dbReference type="BioGRID" id="116536">
    <property type="interactions" value="23"/>
</dbReference>
<dbReference type="FunCoup" id="Q9Y2H8">
    <property type="interactions" value="67"/>
</dbReference>
<dbReference type="IntAct" id="Q9Y2H8">
    <property type="interactions" value="23"/>
</dbReference>
<dbReference type="MINT" id="Q9Y2H8"/>
<dbReference type="STRING" id="9606.ENSP00000364379"/>
<dbReference type="iPTMnet" id="Q9Y2H8"/>
<dbReference type="PhosphoSitePlus" id="Q9Y2H8"/>
<dbReference type="BioMuta" id="ZNF510"/>
<dbReference type="DMDM" id="20178235"/>
<dbReference type="jPOST" id="Q9Y2H8"/>
<dbReference type="MassIVE" id="Q9Y2H8"/>
<dbReference type="PaxDb" id="9606-ENSP00000364379"/>
<dbReference type="PeptideAtlas" id="Q9Y2H8"/>
<dbReference type="ProteomicsDB" id="85787"/>
<dbReference type="Antibodypedia" id="55571">
    <property type="antibodies" value="79 antibodies from 14 providers"/>
</dbReference>
<dbReference type="DNASU" id="22869"/>
<dbReference type="Ensembl" id="ENST00000223428.9">
    <property type="protein sequence ID" value="ENSP00000223428.4"/>
    <property type="gene ID" value="ENSG00000081386.13"/>
</dbReference>
<dbReference type="Ensembl" id="ENST00000375231.5">
    <property type="protein sequence ID" value="ENSP00000364379.1"/>
    <property type="gene ID" value="ENSG00000081386.13"/>
</dbReference>
<dbReference type="GeneID" id="22869"/>
<dbReference type="KEGG" id="hsa:22869"/>
<dbReference type="MANE-Select" id="ENST00000223428.9">
    <property type="protein sequence ID" value="ENSP00000223428.4"/>
    <property type="RefSeq nucleotide sequence ID" value="NM_014930.3"/>
    <property type="RefSeq protein sequence ID" value="NP_055745.1"/>
</dbReference>
<dbReference type="UCSC" id="uc004awn.1">
    <property type="organism name" value="human"/>
</dbReference>
<dbReference type="AGR" id="HGNC:29161"/>
<dbReference type="CTD" id="22869"/>
<dbReference type="DisGeNET" id="22869"/>
<dbReference type="GeneCards" id="ZNF510"/>
<dbReference type="HGNC" id="HGNC:29161">
    <property type="gene designation" value="ZNF510"/>
</dbReference>
<dbReference type="HPA" id="ENSG00000081386">
    <property type="expression patterns" value="Low tissue specificity"/>
</dbReference>
<dbReference type="MIM" id="619385">
    <property type="type" value="gene"/>
</dbReference>
<dbReference type="neXtProt" id="NX_Q9Y2H8"/>
<dbReference type="OpenTargets" id="ENSG00000081386"/>
<dbReference type="PharmGKB" id="PA134944603"/>
<dbReference type="VEuPathDB" id="HostDB:ENSG00000081386"/>
<dbReference type="eggNOG" id="KOG1721">
    <property type="taxonomic scope" value="Eukaryota"/>
</dbReference>
<dbReference type="GeneTree" id="ENSGT00940000153505"/>
<dbReference type="HOGENOM" id="CLU_002678_0_12_1"/>
<dbReference type="InParanoid" id="Q9Y2H8"/>
<dbReference type="OMA" id="FNLHIAP"/>
<dbReference type="OrthoDB" id="40579at2759"/>
<dbReference type="PAN-GO" id="Q9Y2H8">
    <property type="GO annotations" value="4 GO annotations based on evolutionary models"/>
</dbReference>
<dbReference type="PhylomeDB" id="Q9Y2H8"/>
<dbReference type="TreeFam" id="TF337898"/>
<dbReference type="PathwayCommons" id="Q9Y2H8"/>
<dbReference type="Reactome" id="R-HSA-212436">
    <property type="pathway name" value="Generic Transcription Pathway"/>
</dbReference>
<dbReference type="SignaLink" id="Q9Y2H8"/>
<dbReference type="BioGRID-ORCS" id="22869">
    <property type="hits" value="18 hits in 1187 CRISPR screens"/>
</dbReference>
<dbReference type="ChiTaRS" id="ZNF510">
    <property type="organism name" value="human"/>
</dbReference>
<dbReference type="GenomeRNAi" id="22869"/>
<dbReference type="Pharos" id="Q9Y2H8">
    <property type="development level" value="Tdark"/>
</dbReference>
<dbReference type="PRO" id="PR:Q9Y2H8"/>
<dbReference type="Proteomes" id="UP000005640">
    <property type="component" value="Chromosome 9"/>
</dbReference>
<dbReference type="RNAct" id="Q9Y2H8">
    <property type="molecule type" value="protein"/>
</dbReference>
<dbReference type="Bgee" id="ENSG00000081386">
    <property type="expression patterns" value="Expressed in ganglionic eminence and 138 other cell types or tissues"/>
</dbReference>
<dbReference type="GO" id="GO:0005634">
    <property type="term" value="C:nucleus"/>
    <property type="evidence" value="ECO:0007669"/>
    <property type="project" value="UniProtKB-SubCell"/>
</dbReference>
<dbReference type="GO" id="GO:0003677">
    <property type="term" value="F:DNA binding"/>
    <property type="evidence" value="ECO:0007669"/>
    <property type="project" value="UniProtKB-KW"/>
</dbReference>
<dbReference type="GO" id="GO:0000981">
    <property type="term" value="F:DNA-binding transcription factor activity, RNA polymerase II-specific"/>
    <property type="evidence" value="ECO:0000318"/>
    <property type="project" value="GO_Central"/>
</dbReference>
<dbReference type="GO" id="GO:0008270">
    <property type="term" value="F:zinc ion binding"/>
    <property type="evidence" value="ECO:0007669"/>
    <property type="project" value="UniProtKB-KW"/>
</dbReference>
<dbReference type="GO" id="GO:0006357">
    <property type="term" value="P:regulation of transcription by RNA polymerase II"/>
    <property type="evidence" value="ECO:0000318"/>
    <property type="project" value="GO_Central"/>
</dbReference>
<dbReference type="CDD" id="cd07765">
    <property type="entry name" value="KRAB_A-box"/>
    <property type="match status" value="1"/>
</dbReference>
<dbReference type="FunFam" id="3.30.160.60:FF:000008">
    <property type="entry name" value="RB-associated KRAB zinc finger protein-like"/>
    <property type="match status" value="1"/>
</dbReference>
<dbReference type="FunFam" id="3.30.160.60:FF:000295">
    <property type="entry name" value="zinc finger protein 19"/>
    <property type="match status" value="1"/>
</dbReference>
<dbReference type="FunFam" id="3.30.160.60:FF:002090">
    <property type="entry name" value="Zinc finger protein 473"/>
    <property type="match status" value="1"/>
</dbReference>
<dbReference type="FunFam" id="3.30.160.60:FF:000829">
    <property type="entry name" value="zinc finger protein 510"/>
    <property type="match status" value="5"/>
</dbReference>
<dbReference type="FunFam" id="3.30.160.60:FF:001157">
    <property type="entry name" value="Zinc finger protein 793"/>
    <property type="match status" value="1"/>
</dbReference>
<dbReference type="Gene3D" id="6.10.140.140">
    <property type="match status" value="1"/>
</dbReference>
<dbReference type="Gene3D" id="3.30.160.60">
    <property type="entry name" value="Classic Zinc Finger"/>
    <property type="match status" value="10"/>
</dbReference>
<dbReference type="InterPro" id="IPR001909">
    <property type="entry name" value="KRAB"/>
</dbReference>
<dbReference type="InterPro" id="IPR036051">
    <property type="entry name" value="KRAB_dom_sf"/>
</dbReference>
<dbReference type="InterPro" id="IPR036236">
    <property type="entry name" value="Znf_C2H2_sf"/>
</dbReference>
<dbReference type="InterPro" id="IPR013087">
    <property type="entry name" value="Znf_C2H2_type"/>
</dbReference>
<dbReference type="PANTHER" id="PTHR23235">
    <property type="entry name" value="KRUEPPEL-LIKE TRANSCRIPTION FACTOR"/>
    <property type="match status" value="1"/>
</dbReference>
<dbReference type="PANTHER" id="PTHR23235:SF142">
    <property type="entry name" value="ZINC FINGER PROTEIN 384"/>
    <property type="match status" value="1"/>
</dbReference>
<dbReference type="Pfam" id="PF01352">
    <property type="entry name" value="KRAB"/>
    <property type="match status" value="1"/>
</dbReference>
<dbReference type="Pfam" id="PF00096">
    <property type="entry name" value="zf-C2H2"/>
    <property type="match status" value="9"/>
</dbReference>
<dbReference type="SMART" id="SM00349">
    <property type="entry name" value="KRAB"/>
    <property type="match status" value="1"/>
</dbReference>
<dbReference type="SMART" id="SM00355">
    <property type="entry name" value="ZnF_C2H2"/>
    <property type="match status" value="10"/>
</dbReference>
<dbReference type="SUPFAM" id="SSF57667">
    <property type="entry name" value="beta-beta-alpha zinc fingers"/>
    <property type="match status" value="6"/>
</dbReference>
<dbReference type="SUPFAM" id="SSF109640">
    <property type="entry name" value="KRAB domain (Kruppel-associated box)"/>
    <property type="match status" value="1"/>
</dbReference>
<dbReference type="PROSITE" id="PS50805">
    <property type="entry name" value="KRAB"/>
    <property type="match status" value="1"/>
</dbReference>
<dbReference type="PROSITE" id="PS00028">
    <property type="entry name" value="ZINC_FINGER_C2H2_1"/>
    <property type="match status" value="9"/>
</dbReference>
<dbReference type="PROSITE" id="PS50157">
    <property type="entry name" value="ZINC_FINGER_C2H2_2"/>
    <property type="match status" value="10"/>
</dbReference>
<feature type="chain" id="PRO_0000047628" description="Zinc finger protein 510">
    <location>
        <begin position="1"/>
        <end position="683"/>
    </location>
</feature>
<feature type="domain" description="KRAB" evidence="2">
    <location>
        <begin position="46"/>
        <end position="117"/>
    </location>
</feature>
<feature type="zinc finger region" description="C2H2-type 1; degenerate" evidence="1">
    <location>
        <begin position="254"/>
        <end position="276"/>
    </location>
</feature>
<feature type="zinc finger region" description="C2H2-type 2" evidence="1">
    <location>
        <begin position="404"/>
        <end position="426"/>
    </location>
</feature>
<feature type="zinc finger region" description="C2H2-type 3" evidence="1">
    <location>
        <begin position="432"/>
        <end position="454"/>
    </location>
</feature>
<feature type="zinc finger region" description="C2H2-type 4" evidence="1">
    <location>
        <begin position="460"/>
        <end position="482"/>
    </location>
</feature>
<feature type="zinc finger region" description="C2H2-type 5" evidence="1">
    <location>
        <begin position="488"/>
        <end position="510"/>
    </location>
</feature>
<feature type="zinc finger region" description="C2H2-type 6" evidence="1">
    <location>
        <begin position="516"/>
        <end position="538"/>
    </location>
</feature>
<feature type="zinc finger region" description="C2H2-type 7" evidence="1">
    <location>
        <begin position="544"/>
        <end position="566"/>
    </location>
</feature>
<feature type="zinc finger region" description="C2H2-type 8" evidence="1">
    <location>
        <begin position="572"/>
        <end position="594"/>
    </location>
</feature>
<feature type="zinc finger region" description="C2H2-type 9" evidence="1">
    <location>
        <begin position="600"/>
        <end position="622"/>
    </location>
</feature>
<feature type="zinc finger region" description="C2H2-type 10" evidence="1">
    <location>
        <begin position="628"/>
        <end position="650"/>
    </location>
</feature>
<feature type="sequence variant" id="VAR_019982" description="In dbSNP:rs2289651.">
    <original>Q</original>
    <variation>R</variation>
    <location>
        <position position="43"/>
    </location>
</feature>
<feature type="sequence variant" id="VAR_021893" description="In dbSNP:rs3780548.">
    <original>C</original>
    <variation>R</variation>
    <location>
        <position position="89"/>
    </location>
</feature>
<feature type="sequence variant" id="VAR_052848" description="In dbSNP:rs10217154.">
    <original>N</original>
    <variation>K</variation>
    <location>
        <position position="273"/>
    </location>
</feature>
<feature type="sequence variant" id="VAR_052849" description="In dbSNP:rs11999094.">
    <original>H</original>
    <variation>D</variation>
    <location>
        <position position="398"/>
    </location>
</feature>
<feature type="sequence variant" id="VAR_052850" description="In dbSNP:rs10217494.">
    <original>M</original>
    <variation>I</variation>
    <location>
        <position position="401"/>
    </location>
</feature>
<feature type="sequence variant" id="VAR_052851" description="In dbSNP:rs10119874.">
    <original>G</original>
    <variation>E</variation>
    <location>
        <position position="634"/>
    </location>
</feature>
<evidence type="ECO:0000255" key="1">
    <source>
        <dbReference type="PROSITE-ProRule" id="PRU00042"/>
    </source>
</evidence>
<evidence type="ECO:0000255" key="2">
    <source>
        <dbReference type="PROSITE-ProRule" id="PRU00119"/>
    </source>
</evidence>
<evidence type="ECO:0000305" key="3"/>
<organism>
    <name type="scientific">Homo sapiens</name>
    <name type="common">Human</name>
    <dbReference type="NCBI Taxonomy" id="9606"/>
    <lineage>
        <taxon>Eukaryota</taxon>
        <taxon>Metazoa</taxon>
        <taxon>Chordata</taxon>
        <taxon>Craniata</taxon>
        <taxon>Vertebrata</taxon>
        <taxon>Euteleostomi</taxon>
        <taxon>Mammalia</taxon>
        <taxon>Eutheria</taxon>
        <taxon>Euarchontoglires</taxon>
        <taxon>Primates</taxon>
        <taxon>Haplorrhini</taxon>
        <taxon>Catarrhini</taxon>
        <taxon>Hominidae</taxon>
        <taxon>Homo</taxon>
    </lineage>
</organism>
<reference key="1">
    <citation type="journal article" date="1999" name="DNA Res.">
        <title>Prediction of the coding sequences of unidentified human genes. XIII. The complete sequences of 100 new cDNA clones from brain which code for large proteins in vitro.</title>
        <authorList>
            <person name="Nagase T."/>
            <person name="Ishikawa K."/>
            <person name="Suyama M."/>
            <person name="Kikuno R."/>
            <person name="Hirosawa M."/>
            <person name="Miyajima N."/>
            <person name="Tanaka A."/>
            <person name="Kotani H."/>
            <person name="Nomura N."/>
            <person name="Ohara O."/>
        </authorList>
    </citation>
    <scope>NUCLEOTIDE SEQUENCE [LARGE SCALE MRNA]</scope>
    <source>
        <tissue>Brain</tissue>
    </source>
</reference>
<reference key="2">
    <citation type="journal article" date="2004" name="Nat. Genet.">
        <title>Complete sequencing and characterization of 21,243 full-length human cDNAs.</title>
        <authorList>
            <person name="Ota T."/>
            <person name="Suzuki Y."/>
            <person name="Nishikawa T."/>
            <person name="Otsuki T."/>
            <person name="Sugiyama T."/>
            <person name="Irie R."/>
            <person name="Wakamatsu A."/>
            <person name="Hayashi K."/>
            <person name="Sato H."/>
            <person name="Nagai K."/>
            <person name="Kimura K."/>
            <person name="Makita H."/>
            <person name="Sekine M."/>
            <person name="Obayashi M."/>
            <person name="Nishi T."/>
            <person name="Shibahara T."/>
            <person name="Tanaka T."/>
            <person name="Ishii S."/>
            <person name="Yamamoto J."/>
            <person name="Saito K."/>
            <person name="Kawai Y."/>
            <person name="Isono Y."/>
            <person name="Nakamura Y."/>
            <person name="Nagahari K."/>
            <person name="Murakami K."/>
            <person name="Yasuda T."/>
            <person name="Iwayanagi T."/>
            <person name="Wagatsuma M."/>
            <person name="Shiratori A."/>
            <person name="Sudo H."/>
            <person name="Hosoiri T."/>
            <person name="Kaku Y."/>
            <person name="Kodaira H."/>
            <person name="Kondo H."/>
            <person name="Sugawara M."/>
            <person name="Takahashi M."/>
            <person name="Kanda K."/>
            <person name="Yokoi T."/>
            <person name="Furuya T."/>
            <person name="Kikkawa E."/>
            <person name="Omura Y."/>
            <person name="Abe K."/>
            <person name="Kamihara K."/>
            <person name="Katsuta N."/>
            <person name="Sato K."/>
            <person name="Tanikawa M."/>
            <person name="Yamazaki M."/>
            <person name="Ninomiya K."/>
            <person name="Ishibashi T."/>
            <person name="Yamashita H."/>
            <person name="Murakawa K."/>
            <person name="Fujimori K."/>
            <person name="Tanai H."/>
            <person name="Kimata M."/>
            <person name="Watanabe M."/>
            <person name="Hiraoka S."/>
            <person name="Chiba Y."/>
            <person name="Ishida S."/>
            <person name="Ono Y."/>
            <person name="Takiguchi S."/>
            <person name="Watanabe S."/>
            <person name="Yosida M."/>
            <person name="Hotuta T."/>
            <person name="Kusano J."/>
            <person name="Kanehori K."/>
            <person name="Takahashi-Fujii A."/>
            <person name="Hara H."/>
            <person name="Tanase T.-O."/>
            <person name="Nomura Y."/>
            <person name="Togiya S."/>
            <person name="Komai F."/>
            <person name="Hara R."/>
            <person name="Takeuchi K."/>
            <person name="Arita M."/>
            <person name="Imose N."/>
            <person name="Musashino K."/>
            <person name="Yuuki H."/>
            <person name="Oshima A."/>
            <person name="Sasaki N."/>
            <person name="Aotsuka S."/>
            <person name="Yoshikawa Y."/>
            <person name="Matsunawa H."/>
            <person name="Ichihara T."/>
            <person name="Shiohata N."/>
            <person name="Sano S."/>
            <person name="Moriya S."/>
            <person name="Momiyama H."/>
            <person name="Satoh N."/>
            <person name="Takami S."/>
            <person name="Terashima Y."/>
            <person name="Suzuki O."/>
            <person name="Nakagawa S."/>
            <person name="Senoh A."/>
            <person name="Mizoguchi H."/>
            <person name="Goto Y."/>
            <person name="Shimizu F."/>
            <person name="Wakebe H."/>
            <person name="Hishigaki H."/>
            <person name="Watanabe T."/>
            <person name="Sugiyama A."/>
            <person name="Takemoto M."/>
            <person name="Kawakami B."/>
            <person name="Yamazaki M."/>
            <person name="Watanabe K."/>
            <person name="Kumagai A."/>
            <person name="Itakura S."/>
            <person name="Fukuzumi Y."/>
            <person name="Fujimori Y."/>
            <person name="Komiyama M."/>
            <person name="Tashiro H."/>
            <person name="Tanigami A."/>
            <person name="Fujiwara T."/>
            <person name="Ono T."/>
            <person name="Yamada K."/>
            <person name="Fujii Y."/>
            <person name="Ozaki K."/>
            <person name="Hirao M."/>
            <person name="Ohmori Y."/>
            <person name="Kawabata A."/>
            <person name="Hikiji T."/>
            <person name="Kobatake N."/>
            <person name="Inagaki H."/>
            <person name="Ikema Y."/>
            <person name="Okamoto S."/>
            <person name="Okitani R."/>
            <person name="Kawakami T."/>
            <person name="Noguchi S."/>
            <person name="Itoh T."/>
            <person name="Shigeta K."/>
            <person name="Senba T."/>
            <person name="Matsumura K."/>
            <person name="Nakajima Y."/>
            <person name="Mizuno T."/>
            <person name="Morinaga M."/>
            <person name="Sasaki M."/>
            <person name="Togashi T."/>
            <person name="Oyama M."/>
            <person name="Hata H."/>
            <person name="Watanabe M."/>
            <person name="Komatsu T."/>
            <person name="Mizushima-Sugano J."/>
            <person name="Satoh T."/>
            <person name="Shirai Y."/>
            <person name="Takahashi Y."/>
            <person name="Nakagawa K."/>
            <person name="Okumura K."/>
            <person name="Nagase T."/>
            <person name="Nomura N."/>
            <person name="Kikuchi H."/>
            <person name="Masuho Y."/>
            <person name="Yamashita R."/>
            <person name="Nakai K."/>
            <person name="Yada T."/>
            <person name="Nakamura Y."/>
            <person name="Ohara O."/>
            <person name="Isogai T."/>
            <person name="Sugano S."/>
        </authorList>
    </citation>
    <scope>NUCLEOTIDE SEQUENCE [LARGE SCALE MRNA]</scope>
    <source>
        <tissue>Testis</tissue>
    </source>
</reference>
<reference key="3">
    <citation type="journal article" date="2004" name="Nature">
        <title>DNA sequence and analysis of human chromosome 9.</title>
        <authorList>
            <person name="Humphray S.J."/>
            <person name="Oliver K."/>
            <person name="Hunt A.R."/>
            <person name="Plumb R.W."/>
            <person name="Loveland J.E."/>
            <person name="Howe K.L."/>
            <person name="Andrews T.D."/>
            <person name="Searle S."/>
            <person name="Hunt S.E."/>
            <person name="Scott C.E."/>
            <person name="Jones M.C."/>
            <person name="Ainscough R."/>
            <person name="Almeida J.P."/>
            <person name="Ambrose K.D."/>
            <person name="Ashwell R.I.S."/>
            <person name="Babbage A.K."/>
            <person name="Babbage S."/>
            <person name="Bagguley C.L."/>
            <person name="Bailey J."/>
            <person name="Banerjee R."/>
            <person name="Barker D.J."/>
            <person name="Barlow K.F."/>
            <person name="Bates K."/>
            <person name="Beasley H."/>
            <person name="Beasley O."/>
            <person name="Bird C.P."/>
            <person name="Bray-Allen S."/>
            <person name="Brown A.J."/>
            <person name="Brown J.Y."/>
            <person name="Burford D."/>
            <person name="Burrill W."/>
            <person name="Burton J."/>
            <person name="Carder C."/>
            <person name="Carter N.P."/>
            <person name="Chapman J.C."/>
            <person name="Chen Y."/>
            <person name="Clarke G."/>
            <person name="Clark S.Y."/>
            <person name="Clee C.M."/>
            <person name="Clegg S."/>
            <person name="Collier R.E."/>
            <person name="Corby N."/>
            <person name="Crosier M."/>
            <person name="Cummings A.T."/>
            <person name="Davies J."/>
            <person name="Dhami P."/>
            <person name="Dunn M."/>
            <person name="Dutta I."/>
            <person name="Dyer L.W."/>
            <person name="Earthrowl M.E."/>
            <person name="Faulkner L."/>
            <person name="Fleming C.J."/>
            <person name="Frankish A."/>
            <person name="Frankland J.A."/>
            <person name="French L."/>
            <person name="Fricker D.G."/>
            <person name="Garner P."/>
            <person name="Garnett J."/>
            <person name="Ghori J."/>
            <person name="Gilbert J.G.R."/>
            <person name="Glison C."/>
            <person name="Grafham D.V."/>
            <person name="Gribble S."/>
            <person name="Griffiths C."/>
            <person name="Griffiths-Jones S."/>
            <person name="Grocock R."/>
            <person name="Guy J."/>
            <person name="Hall R.E."/>
            <person name="Hammond S."/>
            <person name="Harley J.L."/>
            <person name="Harrison E.S.I."/>
            <person name="Hart E.A."/>
            <person name="Heath P.D."/>
            <person name="Henderson C.D."/>
            <person name="Hopkins B.L."/>
            <person name="Howard P.J."/>
            <person name="Howden P.J."/>
            <person name="Huckle E."/>
            <person name="Johnson C."/>
            <person name="Johnson D."/>
            <person name="Joy A.A."/>
            <person name="Kay M."/>
            <person name="Keenan S."/>
            <person name="Kershaw J.K."/>
            <person name="Kimberley A.M."/>
            <person name="King A."/>
            <person name="Knights A."/>
            <person name="Laird G.K."/>
            <person name="Langford C."/>
            <person name="Lawlor S."/>
            <person name="Leongamornlert D.A."/>
            <person name="Leversha M."/>
            <person name="Lloyd C."/>
            <person name="Lloyd D.M."/>
            <person name="Lovell J."/>
            <person name="Martin S."/>
            <person name="Mashreghi-Mohammadi M."/>
            <person name="Matthews L."/>
            <person name="McLaren S."/>
            <person name="McLay K.E."/>
            <person name="McMurray A."/>
            <person name="Milne S."/>
            <person name="Nickerson T."/>
            <person name="Nisbett J."/>
            <person name="Nordsiek G."/>
            <person name="Pearce A.V."/>
            <person name="Peck A.I."/>
            <person name="Porter K.M."/>
            <person name="Pandian R."/>
            <person name="Pelan S."/>
            <person name="Phillimore B."/>
            <person name="Povey S."/>
            <person name="Ramsey Y."/>
            <person name="Rand V."/>
            <person name="Scharfe M."/>
            <person name="Sehra H.K."/>
            <person name="Shownkeen R."/>
            <person name="Sims S.K."/>
            <person name="Skuce C.D."/>
            <person name="Smith M."/>
            <person name="Steward C.A."/>
            <person name="Swarbreck D."/>
            <person name="Sycamore N."/>
            <person name="Tester J."/>
            <person name="Thorpe A."/>
            <person name="Tracey A."/>
            <person name="Tromans A."/>
            <person name="Thomas D.W."/>
            <person name="Wall M."/>
            <person name="Wallis J.M."/>
            <person name="West A.P."/>
            <person name="Whitehead S.L."/>
            <person name="Willey D.L."/>
            <person name="Williams S.A."/>
            <person name="Wilming L."/>
            <person name="Wray P.W."/>
            <person name="Young L."/>
            <person name="Ashurst J.L."/>
            <person name="Coulson A."/>
            <person name="Blocker H."/>
            <person name="Durbin R.M."/>
            <person name="Sulston J.E."/>
            <person name="Hubbard T."/>
            <person name="Jackson M.J."/>
            <person name="Bentley D.R."/>
            <person name="Beck S."/>
            <person name="Rogers J."/>
            <person name="Dunham I."/>
        </authorList>
    </citation>
    <scope>NUCLEOTIDE SEQUENCE [LARGE SCALE GENOMIC DNA]</scope>
</reference>
<reference key="4">
    <citation type="submission" date="2005-07" db="EMBL/GenBank/DDBJ databases">
        <authorList>
            <person name="Mural R.J."/>
            <person name="Istrail S."/>
            <person name="Sutton G."/>
            <person name="Florea L."/>
            <person name="Halpern A.L."/>
            <person name="Mobarry C.M."/>
            <person name="Lippert R."/>
            <person name="Walenz B."/>
            <person name="Shatkay H."/>
            <person name="Dew I."/>
            <person name="Miller J.R."/>
            <person name="Flanigan M.J."/>
            <person name="Edwards N.J."/>
            <person name="Bolanos R."/>
            <person name="Fasulo D."/>
            <person name="Halldorsson B.V."/>
            <person name="Hannenhalli S."/>
            <person name="Turner R."/>
            <person name="Yooseph S."/>
            <person name="Lu F."/>
            <person name="Nusskern D.R."/>
            <person name="Shue B.C."/>
            <person name="Zheng X.H."/>
            <person name="Zhong F."/>
            <person name="Delcher A.L."/>
            <person name="Huson D.H."/>
            <person name="Kravitz S.A."/>
            <person name="Mouchard L."/>
            <person name="Reinert K."/>
            <person name="Remington K.A."/>
            <person name="Clark A.G."/>
            <person name="Waterman M.S."/>
            <person name="Eichler E.E."/>
            <person name="Adams M.D."/>
            <person name="Hunkapiller M.W."/>
            <person name="Myers E.W."/>
            <person name="Venter J.C."/>
        </authorList>
    </citation>
    <scope>NUCLEOTIDE SEQUENCE [LARGE SCALE GENOMIC DNA]</scope>
</reference>
<reference key="5">
    <citation type="journal article" date="2004" name="Genome Res.">
        <title>The status, quality, and expansion of the NIH full-length cDNA project: the Mammalian Gene Collection (MGC).</title>
        <authorList>
            <consortium name="The MGC Project Team"/>
        </authorList>
    </citation>
    <scope>NUCLEOTIDE SEQUENCE [LARGE SCALE MRNA] OF 1-467</scope>
    <source>
        <tissue>Prostate</tissue>
    </source>
</reference>
<protein>
    <recommendedName>
        <fullName>Zinc finger protein 510</fullName>
    </recommendedName>
</protein>
<accession>Q9Y2H8</accession>
<accession>Q5SZP5</accession>
<name>ZN510_HUMAN</name>
<gene>
    <name type="primary">ZNF510</name>
    <name type="synonym">KIAA0972</name>
</gene>